<feature type="chain" id="PRO_1000060988" description="Small ribosomal subunit protein uS19">
    <location>
        <begin position="1"/>
        <end position="93"/>
    </location>
</feature>
<comment type="function">
    <text evidence="1">Protein S19 forms a complex with S13 that binds strongly to the 16S ribosomal RNA.</text>
</comment>
<comment type="similarity">
    <text evidence="1">Belongs to the universal ribosomal protein uS19 family.</text>
</comment>
<name>RS19_ALKOO</name>
<evidence type="ECO:0000255" key="1">
    <source>
        <dbReference type="HAMAP-Rule" id="MF_00531"/>
    </source>
</evidence>
<evidence type="ECO:0000305" key="2"/>
<proteinExistence type="inferred from homology"/>
<gene>
    <name evidence="1" type="primary">rpsS</name>
    <name type="ordered locus">Clos_0496</name>
</gene>
<dbReference type="EMBL" id="CP000853">
    <property type="protein sequence ID" value="ABW18058.1"/>
    <property type="molecule type" value="Genomic_DNA"/>
</dbReference>
<dbReference type="RefSeq" id="WP_012158372.1">
    <property type="nucleotide sequence ID" value="NC_009922.1"/>
</dbReference>
<dbReference type="SMR" id="A8MLE4"/>
<dbReference type="STRING" id="350688.Clos_0496"/>
<dbReference type="KEGG" id="aoe:Clos_0496"/>
<dbReference type="eggNOG" id="COG0185">
    <property type="taxonomic scope" value="Bacteria"/>
</dbReference>
<dbReference type="HOGENOM" id="CLU_144911_0_1_9"/>
<dbReference type="OrthoDB" id="9797833at2"/>
<dbReference type="Proteomes" id="UP000000269">
    <property type="component" value="Chromosome"/>
</dbReference>
<dbReference type="GO" id="GO:0005737">
    <property type="term" value="C:cytoplasm"/>
    <property type="evidence" value="ECO:0007669"/>
    <property type="project" value="UniProtKB-ARBA"/>
</dbReference>
<dbReference type="GO" id="GO:0015935">
    <property type="term" value="C:small ribosomal subunit"/>
    <property type="evidence" value="ECO:0007669"/>
    <property type="project" value="InterPro"/>
</dbReference>
<dbReference type="GO" id="GO:0019843">
    <property type="term" value="F:rRNA binding"/>
    <property type="evidence" value="ECO:0007669"/>
    <property type="project" value="UniProtKB-UniRule"/>
</dbReference>
<dbReference type="GO" id="GO:0003735">
    <property type="term" value="F:structural constituent of ribosome"/>
    <property type="evidence" value="ECO:0007669"/>
    <property type="project" value="InterPro"/>
</dbReference>
<dbReference type="GO" id="GO:0000028">
    <property type="term" value="P:ribosomal small subunit assembly"/>
    <property type="evidence" value="ECO:0007669"/>
    <property type="project" value="TreeGrafter"/>
</dbReference>
<dbReference type="GO" id="GO:0006412">
    <property type="term" value="P:translation"/>
    <property type="evidence" value="ECO:0007669"/>
    <property type="project" value="UniProtKB-UniRule"/>
</dbReference>
<dbReference type="FunFam" id="3.30.860.10:FF:000001">
    <property type="entry name" value="30S ribosomal protein S19"/>
    <property type="match status" value="1"/>
</dbReference>
<dbReference type="Gene3D" id="3.30.860.10">
    <property type="entry name" value="30s Ribosomal Protein S19, Chain A"/>
    <property type="match status" value="1"/>
</dbReference>
<dbReference type="HAMAP" id="MF_00531">
    <property type="entry name" value="Ribosomal_uS19"/>
    <property type="match status" value="1"/>
</dbReference>
<dbReference type="InterPro" id="IPR002222">
    <property type="entry name" value="Ribosomal_uS19"/>
</dbReference>
<dbReference type="InterPro" id="IPR005732">
    <property type="entry name" value="Ribosomal_uS19_bac-type"/>
</dbReference>
<dbReference type="InterPro" id="IPR020934">
    <property type="entry name" value="Ribosomal_uS19_CS"/>
</dbReference>
<dbReference type="InterPro" id="IPR023575">
    <property type="entry name" value="Ribosomal_uS19_SF"/>
</dbReference>
<dbReference type="NCBIfam" id="TIGR01050">
    <property type="entry name" value="rpsS_bact"/>
    <property type="match status" value="1"/>
</dbReference>
<dbReference type="PANTHER" id="PTHR11880">
    <property type="entry name" value="RIBOSOMAL PROTEIN S19P FAMILY MEMBER"/>
    <property type="match status" value="1"/>
</dbReference>
<dbReference type="PANTHER" id="PTHR11880:SF8">
    <property type="entry name" value="SMALL RIBOSOMAL SUBUNIT PROTEIN US19M"/>
    <property type="match status" value="1"/>
</dbReference>
<dbReference type="Pfam" id="PF00203">
    <property type="entry name" value="Ribosomal_S19"/>
    <property type="match status" value="1"/>
</dbReference>
<dbReference type="PIRSF" id="PIRSF002144">
    <property type="entry name" value="Ribosomal_S19"/>
    <property type="match status" value="1"/>
</dbReference>
<dbReference type="PRINTS" id="PR00975">
    <property type="entry name" value="RIBOSOMALS19"/>
</dbReference>
<dbReference type="SUPFAM" id="SSF54570">
    <property type="entry name" value="Ribosomal protein S19"/>
    <property type="match status" value="1"/>
</dbReference>
<dbReference type="PROSITE" id="PS00323">
    <property type="entry name" value="RIBOSOMAL_S19"/>
    <property type="match status" value="1"/>
</dbReference>
<protein>
    <recommendedName>
        <fullName evidence="1">Small ribosomal subunit protein uS19</fullName>
    </recommendedName>
    <alternativeName>
        <fullName evidence="2">30S ribosomal protein S19</fullName>
    </alternativeName>
</protein>
<keyword id="KW-1185">Reference proteome</keyword>
<keyword id="KW-0687">Ribonucleoprotein</keyword>
<keyword id="KW-0689">Ribosomal protein</keyword>
<keyword id="KW-0694">RNA-binding</keyword>
<keyword id="KW-0699">rRNA-binding</keyword>
<reference key="1">
    <citation type="submission" date="2007-10" db="EMBL/GenBank/DDBJ databases">
        <title>Complete genome of Alkaliphilus oremlandii OhILAs.</title>
        <authorList>
            <person name="Copeland A."/>
            <person name="Lucas S."/>
            <person name="Lapidus A."/>
            <person name="Barry K."/>
            <person name="Detter J.C."/>
            <person name="Glavina del Rio T."/>
            <person name="Hammon N."/>
            <person name="Israni S."/>
            <person name="Dalin E."/>
            <person name="Tice H."/>
            <person name="Pitluck S."/>
            <person name="Chain P."/>
            <person name="Malfatti S."/>
            <person name="Shin M."/>
            <person name="Vergez L."/>
            <person name="Schmutz J."/>
            <person name="Larimer F."/>
            <person name="Land M."/>
            <person name="Hauser L."/>
            <person name="Kyrpides N."/>
            <person name="Mikhailova N."/>
            <person name="Stolz J.F."/>
            <person name="Dawson A."/>
            <person name="Fisher E."/>
            <person name="Crable B."/>
            <person name="Perera E."/>
            <person name="Lisak J."/>
            <person name="Ranganathan M."/>
            <person name="Basu P."/>
            <person name="Richardson P."/>
        </authorList>
    </citation>
    <scope>NUCLEOTIDE SEQUENCE [LARGE SCALE GENOMIC DNA]</scope>
    <source>
        <strain>OhILAs</strain>
    </source>
</reference>
<organism>
    <name type="scientific">Alkaliphilus oremlandii (strain OhILAs)</name>
    <name type="common">Clostridium oremlandii (strain OhILAs)</name>
    <dbReference type="NCBI Taxonomy" id="350688"/>
    <lineage>
        <taxon>Bacteria</taxon>
        <taxon>Bacillati</taxon>
        <taxon>Bacillota</taxon>
        <taxon>Clostridia</taxon>
        <taxon>Peptostreptococcales</taxon>
        <taxon>Natronincolaceae</taxon>
        <taxon>Alkaliphilus</taxon>
    </lineage>
</organism>
<accession>A8MLE4</accession>
<sequence>MSRSLKKGPFIHQGLLKKIEEMNAKNEKKVIKTWSRASTIFPQMIGHTIAVHDGRKHVPVYVTEDMVGHKLGEFALTRTYRGHDDNEKTTKRK</sequence>